<keyword id="KW-0064">Aspartyl protease</keyword>
<keyword id="KW-0067">ATP-binding</keyword>
<keyword id="KW-0963">Cytoplasm</keyword>
<keyword id="KW-0229">DNA integration</keyword>
<keyword id="KW-0233">DNA recombination</keyword>
<keyword id="KW-0238">DNA-binding</keyword>
<keyword id="KW-0239">DNA-directed DNA polymerase</keyword>
<keyword id="KW-0255">Endonuclease</keyword>
<keyword id="KW-0378">Hydrolase</keyword>
<keyword id="KW-0460">Magnesium</keyword>
<keyword id="KW-0479">Metal-binding</keyword>
<keyword id="KW-0511">Multifunctional enzyme</keyword>
<keyword id="KW-0540">Nuclease</keyword>
<keyword id="KW-0547">Nucleotide-binding</keyword>
<keyword id="KW-0548">Nucleotidyltransferase</keyword>
<keyword id="KW-0539">Nucleus</keyword>
<keyword id="KW-0645">Protease</keyword>
<keyword id="KW-1185">Reference proteome</keyword>
<keyword id="KW-0688">Ribosomal frameshifting</keyword>
<keyword id="KW-0694">RNA-binding</keyword>
<keyword id="KW-0695">RNA-directed DNA polymerase</keyword>
<keyword id="KW-0808">Transferase</keyword>
<keyword id="KW-0814">Transposable element</keyword>
<keyword id="KW-0815">Transposition</keyword>
<keyword id="KW-1188">Viral release from host cell</keyword>
<keyword id="KW-0917">Virion maturation</keyword>
<keyword id="KW-0862">Zinc</keyword>
<keyword id="KW-0863">Zinc-finger</keyword>
<feature type="chain" id="PRO_0000279340" description="Transposon Ty2-OR1 Gag-Pol polyprotein">
    <location>
        <begin position="1"/>
        <end position="1770"/>
    </location>
</feature>
<feature type="chain" id="PRO_0000279341" description="Capsid protein" evidence="1">
    <location>
        <begin position="1"/>
        <end position="397"/>
    </location>
</feature>
<feature type="chain" id="PRO_0000279342" description="Ty2 protease" evidence="1">
    <location>
        <begin position="398"/>
        <end position="578"/>
    </location>
</feature>
<feature type="chain" id="PRO_0000279343" description="Integrase" evidence="1">
    <location>
        <begin position="579"/>
        <end position="1232"/>
    </location>
</feature>
<feature type="chain" id="PRO_0000279344" description="Reverse transcriptase/ribonuclease H" evidence="1">
    <location>
        <begin position="1233"/>
        <end position="1770"/>
    </location>
</feature>
<feature type="domain" description="Integrase catalytic" evidence="2">
    <location>
        <begin position="656"/>
        <end position="831"/>
    </location>
</feature>
<feature type="domain" description="Reverse transcriptase Ty1/copia-type">
    <location>
        <begin position="1353"/>
        <end position="1491"/>
    </location>
</feature>
<feature type="domain" description="RNase H Ty1/copia-type">
    <location>
        <begin position="1625"/>
        <end position="1767"/>
    </location>
</feature>
<feature type="region of interest" description="Disordered" evidence="3">
    <location>
        <begin position="1"/>
        <end position="88"/>
    </location>
</feature>
<feature type="region of interest" description="RNA-binding" evidence="1">
    <location>
        <begin position="295"/>
        <end position="397"/>
    </location>
</feature>
<feature type="region of interest" description="Disordered" evidence="3">
    <location>
        <begin position="359"/>
        <end position="449"/>
    </location>
</feature>
<feature type="region of interest" description="Integrase-type zinc finger-like">
    <location>
        <begin position="579"/>
        <end position="636"/>
    </location>
</feature>
<feature type="region of interest" description="Disordered" evidence="3">
    <location>
        <begin position="916"/>
        <end position="935"/>
    </location>
</feature>
<feature type="region of interest" description="Disordered" evidence="3">
    <location>
        <begin position="1005"/>
        <end position="1038"/>
    </location>
</feature>
<feature type="region of interest" description="Disordered" evidence="3">
    <location>
        <begin position="1057"/>
        <end position="1205"/>
    </location>
</feature>
<feature type="short sequence motif" description="Bipartite nuclear localization signal" evidence="1">
    <location>
        <begin position="1193"/>
        <end position="1227"/>
    </location>
</feature>
<feature type="compositionally biased region" description="Polar residues" evidence="3">
    <location>
        <begin position="1"/>
        <end position="39"/>
    </location>
</feature>
<feature type="compositionally biased region" description="Polar residues" evidence="3">
    <location>
        <begin position="49"/>
        <end position="60"/>
    </location>
</feature>
<feature type="compositionally biased region" description="Low complexity" evidence="3">
    <location>
        <begin position="369"/>
        <end position="381"/>
    </location>
</feature>
<feature type="compositionally biased region" description="Polar residues" evidence="3">
    <location>
        <begin position="399"/>
        <end position="408"/>
    </location>
</feature>
<feature type="compositionally biased region" description="Polar residues" evidence="3">
    <location>
        <begin position="415"/>
        <end position="435"/>
    </location>
</feature>
<feature type="compositionally biased region" description="Polar residues" evidence="3">
    <location>
        <begin position="916"/>
        <end position="929"/>
    </location>
</feature>
<feature type="compositionally biased region" description="Polar residues" evidence="3">
    <location>
        <begin position="1009"/>
        <end position="1024"/>
    </location>
</feature>
<feature type="compositionally biased region" description="Polar residues" evidence="3">
    <location>
        <begin position="1065"/>
        <end position="1082"/>
    </location>
</feature>
<feature type="active site" description="For protease activity; shared with dimeric partner" evidence="1">
    <location>
        <position position="457"/>
    </location>
</feature>
<feature type="binding site" evidence="2">
    <location>
        <position position="667"/>
    </location>
    <ligand>
        <name>Mg(2+)</name>
        <dbReference type="ChEBI" id="CHEBI:18420"/>
        <label>1</label>
        <note>catalytic; for integrase activity</note>
    </ligand>
</feature>
<feature type="binding site" evidence="2">
    <location>
        <position position="732"/>
    </location>
    <ligand>
        <name>Mg(2+)</name>
        <dbReference type="ChEBI" id="CHEBI:18420"/>
        <label>1</label>
        <note>catalytic; for integrase activity</note>
    </ligand>
</feature>
<feature type="binding site" evidence="2">
    <location>
        <position position="1361"/>
    </location>
    <ligand>
        <name>Mg(2+)</name>
        <dbReference type="ChEBI" id="CHEBI:18420"/>
        <label>2</label>
        <note>catalytic; for reverse transcriptase activity</note>
    </ligand>
</feature>
<feature type="binding site" evidence="2">
    <location>
        <position position="1442"/>
    </location>
    <ligand>
        <name>Mg(2+)</name>
        <dbReference type="ChEBI" id="CHEBI:18420"/>
        <label>2</label>
        <note>catalytic; for reverse transcriptase activity</note>
    </ligand>
</feature>
<feature type="binding site" evidence="2">
    <location>
        <position position="1443"/>
    </location>
    <ligand>
        <name>Mg(2+)</name>
        <dbReference type="ChEBI" id="CHEBI:18420"/>
        <label>2</label>
        <note>catalytic; for reverse transcriptase activity</note>
    </ligand>
</feature>
<feature type="binding site" evidence="2">
    <location>
        <position position="1625"/>
    </location>
    <ligand>
        <name>Mg(2+)</name>
        <dbReference type="ChEBI" id="CHEBI:18420"/>
        <label>3</label>
        <note>catalytic; for RNase H activity</note>
    </ligand>
</feature>
<feature type="binding site" evidence="2">
    <location>
        <position position="1667"/>
    </location>
    <ligand>
        <name>Mg(2+)</name>
        <dbReference type="ChEBI" id="CHEBI:18420"/>
        <label>3</label>
        <note>catalytic; for RNase H activity</note>
    </ligand>
</feature>
<feature type="binding site" evidence="2">
    <location>
        <position position="1700"/>
    </location>
    <ligand>
        <name>Mg(2+)</name>
        <dbReference type="ChEBI" id="CHEBI:18420"/>
        <label>3</label>
        <note>catalytic; for RNase H activity</note>
    </ligand>
</feature>
<feature type="site" description="Cleavage; by Ty2 protease" evidence="1">
    <location>
        <begin position="397"/>
        <end position="398"/>
    </location>
</feature>
<feature type="site" description="Cleavage; by Ty2 protease" evidence="1">
    <location>
        <begin position="578"/>
        <end position="579"/>
    </location>
</feature>
<feature type="site" description="Cleavage; by Ty2 protease" evidence="1">
    <location>
        <begin position="1232"/>
        <end position="1233"/>
    </location>
</feature>
<protein>
    <recommendedName>
        <fullName>Transposon Ty2-OR1 Gag-Pol polyprotein</fullName>
    </recommendedName>
    <alternativeName>
        <fullName>TY2A-TY2B</fullName>
    </alternativeName>
    <alternativeName>
        <fullName>Transposon Ty2 TYA-TYB polyprotein</fullName>
    </alternativeName>
    <component>
        <recommendedName>
            <fullName>Capsid protein</fullName>
            <shortName>CA</shortName>
        </recommendedName>
    </component>
    <component>
        <recommendedName>
            <fullName>Ty2 protease</fullName>
            <shortName>PR</shortName>
            <ecNumber>3.4.23.-</ecNumber>
        </recommendedName>
    </component>
    <component>
        <recommendedName>
            <fullName>Integrase</fullName>
            <shortName>IN</shortName>
        </recommendedName>
    </component>
    <component>
        <recommendedName>
            <fullName>Reverse transcriptase/ribonuclease H</fullName>
            <shortName>RT</shortName>
            <shortName>RT-RH</shortName>
            <ecNumber>2.7.7.49</ecNumber>
            <ecNumber>2.7.7.7</ecNumber>
            <ecNumber>3.1.26.4</ecNumber>
        </recommendedName>
    </component>
</protein>
<organism>
    <name type="scientific">Saccharomyces cerevisiae (strain ATCC 204508 / S288c)</name>
    <name type="common">Baker's yeast</name>
    <dbReference type="NCBI Taxonomy" id="559292"/>
    <lineage>
        <taxon>Eukaryota</taxon>
        <taxon>Fungi</taxon>
        <taxon>Dikarya</taxon>
        <taxon>Ascomycota</taxon>
        <taxon>Saccharomycotina</taxon>
        <taxon>Saccharomycetes</taxon>
        <taxon>Saccharomycetales</taxon>
        <taxon>Saccharomycetaceae</taxon>
        <taxon>Saccharomyces</taxon>
    </lineage>
</organism>
<proteinExistence type="inferred from homology"/>
<accession>Q12113</accession>
<accession>D6W2Q0</accession>
<sequence length="1770" mass="201984">MESQQLSQNSPTFHGSAYASVTSKEVPSNQDPLAVSASNLPEFDRDSTKVNSQQETTPGTSAVPENHHHVSPQPASVPPPQNGQYQQHGMMTPNKAMASNWAHYQQPSMMTCSHYQTSPAYYQPDPHYPLPQYIPPLSTSSPDPIGSQDQHSEVPQAKTKVRNNVLPPHTLTSEENFSTWVKFYIRFLKNSNLGDIIPNDQGEIKRQMTYEEHAYIYNTFQAFAPFHLLPTWVKQILEINYSDILTVLCKSVSKMQTNNQELKDWIALANLEYNGSTSADTFEITVSTIIQRLKENNINVSDRLACQLILKGLSGDFKYLRNQYRTKTNMKLSQLFAEIQLIYDENKIMNLNKPSQYKQHSEYKNVSRTSPNTTNTKVTTRNYHRTNSSKPRAAKAHNIATSSKFSRVNNDHINESTVSSQYLSDDNELSLGQQQKESKPTRTIDSNDELPDHLLIDSGASQTLVRSAHYLHHATPNSEINIVDAQKQDIPINAIGNLHFNFQNGTKTSIKALHTPNIAYDLLSLSELANQNITACFTRNTLERSDGTVLAPIVKHGDFYWLSKKYLIPSHISKLTINNVNKSKSVNKYPYPLIHRMLGHANFRSIQKSLKKNAVTYLKESDIEWSNASTYQCPDCLIGKSTKHRHVKGSRLKYQESYEPFQYLHTDIFGPVHHLPKSAPSYFISFTDEKTRFQWVYPLHDRREESILNVFTSILAFIKNQFNARVLVIQMDRGSEYTNKTLHKFFTNRGITACYTTTADSRAHGVAERLNRTLLNDCRTLLHCSGLPNHLWFSAVEFSTIIRNSLVSPKNDKSARQHAGLAGLDITTILPFGQPVIVNNHNPDSKIHPRGIPGYALHPSRNSYGYIIYLPSLKKTVDTTNYVILQNKQTKLDQFDYDTLTFDDDLNRLTAHNQSFIEQNETEQSYDQNTESDHDYQSEIEINSDPLVNDFSSQSLNPLQLDKEPVQKVRAPKEVDADISEYNILPSTIRSRTPHIINKESTEMGGTIESDTTSPRHSSTFTARNQKRPGSPNDMIDLTSQDRVNYGLENIKTTRLGGTEEPYIQRNSDTNIKYRTTNSTPSIDDRSSNSESTTPIISIETKAACDNTPSIDTDPPEYRSSDHATPNIMPDKSSKNVTADSILDDLPLPDLTHQSPTDTSDVSKDIPHIHSRQTNSSLGGMDDSNVLTTTKSKKRSLEDNETEIEVSRDTWNNKNMRSLEPPRSKKRINLIAAIKGVKSIKPVRTTLRYDEAITYNKDNKEKDRYVEAYHKEISQLLKMNTWDTNKYYDRNDIDPKKVINSMFIFNKKRDGTHKARFVARGDIQHPDTYDSDMQSNTVHHYALMTSLSIALDNDYYITQLDISSAYLYADIKEELYIRPPPHLGLNDKLLRLRKSLYGLKQSGANWYETIKSYLINCCDMQEVRGWSCVFKNSQVTICLFVDDMILFSKDLNANKKIITTLKKQYDTKIINLGEGDNEIQYDILGLEIKYQRSKYMKLGMEKSLTEKLPKLNVPLNPKGKKLRAPGQPGHYIDQDELEIDEDEYKEKVHEMQKLIGLASYVGYKFRFDLLYYINTLAQHILFPSRQVLDMTYELIQFMWDTRDKQLIWHKNKPTKPDNKLVAISDASYGNQPYYKSQIGNIFLLNGKVIGGKSTKASLTCTSTTEAEIHAVSEAIPLLNNLSHLVQELNKKPIIKGLLTDSRSTISIIKSTNEEKFRNRFFGTKAMRLRDEVSGNNLYVYYIETNKNIADVMTKPLPIKTFKLLTNKWIH</sequence>
<name>YO21B_YEAST</name>
<reference key="1">
    <citation type="journal article" date="1997" name="Nature">
        <title>The nucleotide sequence of Saccharomyces cerevisiae chromosome XV.</title>
        <authorList>
            <person name="Dujon B."/>
            <person name="Albermann K."/>
            <person name="Aldea M."/>
            <person name="Alexandraki D."/>
            <person name="Ansorge W."/>
            <person name="Arino J."/>
            <person name="Benes V."/>
            <person name="Bohn C."/>
            <person name="Bolotin-Fukuhara M."/>
            <person name="Bordonne R."/>
            <person name="Boyer J."/>
            <person name="Camasses A."/>
            <person name="Casamayor A."/>
            <person name="Casas C."/>
            <person name="Cheret G."/>
            <person name="Cziepluch C."/>
            <person name="Daignan-Fornier B."/>
            <person name="Dang V.-D."/>
            <person name="de Haan M."/>
            <person name="Delius H."/>
            <person name="Durand P."/>
            <person name="Fairhead C."/>
            <person name="Feldmann H."/>
            <person name="Gaillon L."/>
            <person name="Galisson F."/>
            <person name="Gamo F.-J."/>
            <person name="Gancedo C."/>
            <person name="Goffeau A."/>
            <person name="Goulding S.E."/>
            <person name="Grivell L.A."/>
            <person name="Habbig B."/>
            <person name="Hand N.J."/>
            <person name="Hani J."/>
            <person name="Hattenhorst U."/>
            <person name="Hebling U."/>
            <person name="Hernando Y."/>
            <person name="Herrero E."/>
            <person name="Heumann K."/>
            <person name="Hiesel R."/>
            <person name="Hilger F."/>
            <person name="Hofmann B."/>
            <person name="Hollenberg C.P."/>
            <person name="Hughes B."/>
            <person name="Jauniaux J.-C."/>
            <person name="Kalogeropoulos A."/>
            <person name="Katsoulou C."/>
            <person name="Kordes E."/>
            <person name="Lafuente M.J."/>
            <person name="Landt O."/>
            <person name="Louis E.J."/>
            <person name="Maarse A.C."/>
            <person name="Madania A."/>
            <person name="Mannhaupt G."/>
            <person name="Marck C."/>
            <person name="Martin R.P."/>
            <person name="Mewes H.-W."/>
            <person name="Michaux G."/>
            <person name="Paces V."/>
            <person name="Parle-McDermott A.G."/>
            <person name="Pearson B.M."/>
            <person name="Perrin A."/>
            <person name="Pettersson B."/>
            <person name="Poch O."/>
            <person name="Pohl T.M."/>
            <person name="Poirey R."/>
            <person name="Portetelle D."/>
            <person name="Pujol A."/>
            <person name="Purnelle B."/>
            <person name="Ramezani Rad M."/>
            <person name="Rechmann S."/>
            <person name="Schwager C."/>
            <person name="Schweizer M."/>
            <person name="Sor F."/>
            <person name="Sterky F."/>
            <person name="Tarassov I.A."/>
            <person name="Teodoru C."/>
            <person name="Tettelin H."/>
            <person name="Thierry A."/>
            <person name="Tobiasch E."/>
            <person name="Tzermia M."/>
            <person name="Uhlen M."/>
            <person name="Unseld M."/>
            <person name="Valens M."/>
            <person name="Vandenbol M."/>
            <person name="Vetter I."/>
            <person name="Vlcek C."/>
            <person name="Voet M."/>
            <person name="Volckaert G."/>
            <person name="Voss H."/>
            <person name="Wambutt R."/>
            <person name="Wedler H."/>
            <person name="Wiemann S."/>
            <person name="Winsor B."/>
            <person name="Wolfe K.H."/>
            <person name="Zollner A."/>
            <person name="Zumstein E."/>
            <person name="Kleine K."/>
        </authorList>
    </citation>
    <scope>NUCLEOTIDE SEQUENCE [LARGE SCALE GENOMIC DNA]</scope>
    <source>
        <strain>ATCC 204508 / S288c</strain>
    </source>
</reference>
<reference key="2">
    <citation type="journal article" date="2014" name="G3 (Bethesda)">
        <title>The reference genome sequence of Saccharomyces cerevisiae: Then and now.</title>
        <authorList>
            <person name="Engel S.R."/>
            <person name="Dietrich F.S."/>
            <person name="Fisk D.G."/>
            <person name="Binkley G."/>
            <person name="Balakrishnan R."/>
            <person name="Costanzo M.C."/>
            <person name="Dwight S.S."/>
            <person name="Hitz B.C."/>
            <person name="Karra K."/>
            <person name="Nash R.S."/>
            <person name="Weng S."/>
            <person name="Wong E.D."/>
            <person name="Lloyd P."/>
            <person name="Skrzypek M.S."/>
            <person name="Miyasato S.R."/>
            <person name="Simison M."/>
            <person name="Cherry J.M."/>
        </authorList>
    </citation>
    <scope>GENOME REANNOTATION</scope>
    <source>
        <strain>ATCC 204508 / S288c</strain>
    </source>
</reference>
<reference key="3">
    <citation type="journal article" date="1998" name="Genome Res.">
        <title>Transposable elements and genome organization: a comprehensive survey of retrotransposons revealed by the complete Saccharomyces cerevisiae genome sequence.</title>
        <authorList>
            <person name="Kim J.M."/>
            <person name="Vanguri S."/>
            <person name="Boeke J.D."/>
            <person name="Gabriel A."/>
            <person name="Voytas D.F."/>
        </authorList>
    </citation>
    <scope>NOMENCLATURE</scope>
</reference>
<reference key="4">
    <citation type="journal article" date="2005" name="Cytogenet. Genome Res.">
        <title>Happy together: the life and times of Ty retrotransposons and their hosts.</title>
        <authorList>
            <person name="Lesage P."/>
            <person name="Todeschini A.L."/>
        </authorList>
    </citation>
    <scope>REVIEW</scope>
</reference>
<dbReference type="EC" id="3.4.23.-"/>
<dbReference type="EC" id="2.7.7.49"/>
<dbReference type="EC" id="2.7.7.7"/>
<dbReference type="EC" id="3.1.26.4"/>
<dbReference type="EMBL" id="Z75100">
    <property type="protein sequence ID" value="CAA99402.1"/>
    <property type="molecule type" value="Genomic_DNA"/>
</dbReference>
<dbReference type="EMBL" id="Z75101">
    <property type="protein sequence ID" value="CAA99404.1"/>
    <property type="molecule type" value="Genomic_DNA"/>
</dbReference>
<dbReference type="EMBL" id="BK006948">
    <property type="protein sequence ID" value="DAA10966.1"/>
    <property type="molecule type" value="Genomic_DNA"/>
</dbReference>
<dbReference type="PIR" id="S70230">
    <property type="entry name" value="S70230"/>
</dbReference>
<dbReference type="RefSeq" id="NP_058185.3">
    <molecule id="Q12113-1"/>
    <property type="nucleotide sequence ID" value="NM_001184388.4"/>
</dbReference>
<dbReference type="FunCoup" id="Q12113">
    <property type="interactions" value="72"/>
</dbReference>
<dbReference type="MEROPS" id="A11.003"/>
<dbReference type="PaxDb" id="4932-YOR192C-B"/>
<dbReference type="PeptideAtlas" id="Q12113"/>
<dbReference type="GeneID" id="854365"/>
<dbReference type="KEGG" id="sce:YOR192C-B"/>
<dbReference type="AGR" id="SGD:S000007354"/>
<dbReference type="SGD" id="S000007354">
    <property type="gene designation" value="YOR192C-B"/>
</dbReference>
<dbReference type="VEuPathDB" id="FungiDB:YOR192C-B"/>
<dbReference type="eggNOG" id="KOG0017">
    <property type="taxonomic scope" value="Eukaryota"/>
</dbReference>
<dbReference type="HOGENOM" id="CLU_244151_0_0_1"/>
<dbReference type="InParanoid" id="Q12113"/>
<dbReference type="OrthoDB" id="4046078at2759"/>
<dbReference type="Proteomes" id="UP000002311">
    <property type="component" value="Chromosome XV"/>
</dbReference>
<dbReference type="RNAct" id="Q12113">
    <property type="molecule type" value="protein"/>
</dbReference>
<dbReference type="GO" id="GO:0005737">
    <property type="term" value="C:cytoplasm"/>
    <property type="evidence" value="ECO:0007669"/>
    <property type="project" value="UniProtKB-SubCell"/>
</dbReference>
<dbReference type="GO" id="GO:0005634">
    <property type="term" value="C:nucleus"/>
    <property type="evidence" value="ECO:0000314"/>
    <property type="project" value="SGD"/>
</dbReference>
<dbReference type="GO" id="GO:0004190">
    <property type="term" value="F:aspartic-type endopeptidase activity"/>
    <property type="evidence" value="ECO:0007669"/>
    <property type="project" value="UniProtKB-KW"/>
</dbReference>
<dbReference type="GO" id="GO:0005524">
    <property type="term" value="F:ATP binding"/>
    <property type="evidence" value="ECO:0007669"/>
    <property type="project" value="UniProtKB-KW"/>
</dbReference>
<dbReference type="GO" id="GO:0003677">
    <property type="term" value="F:DNA binding"/>
    <property type="evidence" value="ECO:0007669"/>
    <property type="project" value="UniProtKB-KW"/>
</dbReference>
<dbReference type="GO" id="GO:0003887">
    <property type="term" value="F:DNA-directed DNA polymerase activity"/>
    <property type="evidence" value="ECO:0007669"/>
    <property type="project" value="UniProtKB-KW"/>
</dbReference>
<dbReference type="GO" id="GO:0003723">
    <property type="term" value="F:RNA binding"/>
    <property type="evidence" value="ECO:0007669"/>
    <property type="project" value="UniProtKB-KW"/>
</dbReference>
<dbReference type="GO" id="GO:0003964">
    <property type="term" value="F:RNA-directed DNA polymerase activity"/>
    <property type="evidence" value="ECO:0007669"/>
    <property type="project" value="UniProtKB-KW"/>
</dbReference>
<dbReference type="GO" id="GO:0004523">
    <property type="term" value="F:RNA-DNA hybrid ribonuclease activity"/>
    <property type="evidence" value="ECO:0007669"/>
    <property type="project" value="UniProtKB-EC"/>
</dbReference>
<dbReference type="GO" id="GO:0008270">
    <property type="term" value="F:zinc ion binding"/>
    <property type="evidence" value="ECO:0007669"/>
    <property type="project" value="UniProtKB-KW"/>
</dbReference>
<dbReference type="GO" id="GO:0015074">
    <property type="term" value="P:DNA integration"/>
    <property type="evidence" value="ECO:0007669"/>
    <property type="project" value="UniProtKB-KW"/>
</dbReference>
<dbReference type="GO" id="GO:0006310">
    <property type="term" value="P:DNA recombination"/>
    <property type="evidence" value="ECO:0007669"/>
    <property type="project" value="UniProtKB-KW"/>
</dbReference>
<dbReference type="GO" id="GO:0006508">
    <property type="term" value="P:proteolysis"/>
    <property type="evidence" value="ECO:0007669"/>
    <property type="project" value="UniProtKB-KW"/>
</dbReference>
<dbReference type="GO" id="GO:0032196">
    <property type="term" value="P:transposition"/>
    <property type="evidence" value="ECO:0007669"/>
    <property type="project" value="UniProtKB-KW"/>
</dbReference>
<dbReference type="GO" id="GO:0075523">
    <property type="term" value="P:viral translational frameshifting"/>
    <property type="evidence" value="ECO:0007669"/>
    <property type="project" value="UniProtKB-KW"/>
</dbReference>
<dbReference type="CDD" id="cd09272">
    <property type="entry name" value="RNase_HI_RT_Ty1"/>
    <property type="match status" value="1"/>
</dbReference>
<dbReference type="FunFam" id="3.30.420.10:FF:000050">
    <property type="entry name" value="Transposon Ty2-DR3 Gag-Pol polyprotein"/>
    <property type="match status" value="1"/>
</dbReference>
<dbReference type="Gene3D" id="3.30.420.10">
    <property type="entry name" value="Ribonuclease H-like superfamily/Ribonuclease H"/>
    <property type="match status" value="1"/>
</dbReference>
<dbReference type="InterPro" id="IPR043502">
    <property type="entry name" value="DNA/RNA_pol_sf"/>
</dbReference>
<dbReference type="InterPro" id="IPR001584">
    <property type="entry name" value="Integrase_cat-core"/>
</dbReference>
<dbReference type="InterPro" id="IPR054722">
    <property type="entry name" value="PolX-like_BBD"/>
</dbReference>
<dbReference type="InterPro" id="IPR039537">
    <property type="entry name" value="Retrotran_Ty1/copia-like"/>
</dbReference>
<dbReference type="InterPro" id="IPR012337">
    <property type="entry name" value="RNaseH-like_sf"/>
</dbReference>
<dbReference type="InterPro" id="IPR036397">
    <property type="entry name" value="RNaseH_sf"/>
</dbReference>
<dbReference type="InterPro" id="IPR013103">
    <property type="entry name" value="RVT_2"/>
</dbReference>
<dbReference type="InterPro" id="IPR015820">
    <property type="entry name" value="TYA"/>
</dbReference>
<dbReference type="PANTHER" id="PTHR42648">
    <property type="entry name" value="TRANSPOSASE, PUTATIVE-RELATED"/>
    <property type="match status" value="1"/>
</dbReference>
<dbReference type="PANTHER" id="PTHR42648:SF11">
    <property type="entry name" value="TRANSPOSON TY4-P GAG-POL POLYPROTEIN"/>
    <property type="match status" value="1"/>
</dbReference>
<dbReference type="Pfam" id="PF22936">
    <property type="entry name" value="Pol_BBD"/>
    <property type="match status" value="1"/>
</dbReference>
<dbReference type="Pfam" id="PF00665">
    <property type="entry name" value="rve"/>
    <property type="match status" value="1"/>
</dbReference>
<dbReference type="Pfam" id="PF07727">
    <property type="entry name" value="RVT_2"/>
    <property type="match status" value="1"/>
</dbReference>
<dbReference type="Pfam" id="PF01021">
    <property type="entry name" value="TYA"/>
    <property type="match status" value="1"/>
</dbReference>
<dbReference type="SUPFAM" id="SSF56672">
    <property type="entry name" value="DNA/RNA polymerases"/>
    <property type="match status" value="1"/>
</dbReference>
<dbReference type="SUPFAM" id="SSF53098">
    <property type="entry name" value="Ribonuclease H-like"/>
    <property type="match status" value="1"/>
</dbReference>
<dbReference type="PROSITE" id="PS50994">
    <property type="entry name" value="INTEGRASE"/>
    <property type="match status" value="1"/>
</dbReference>
<evidence type="ECO:0000250" key="1"/>
<evidence type="ECO:0000255" key="2">
    <source>
        <dbReference type="PROSITE-ProRule" id="PRU00457"/>
    </source>
</evidence>
<evidence type="ECO:0000256" key="3">
    <source>
        <dbReference type="SAM" id="MobiDB-lite"/>
    </source>
</evidence>
<comment type="function">
    <text evidence="1">Capsid protein (CA) is the structural component of the virus-like particle (VLP), forming the shell that encapsulates the retrotransposons dimeric RNA genome. The particles are assembled from trimer-clustered units and there are holes in the capsid shells that allow for the diffusion of macromolecules. CA also has nucleocapsid-like chaperone activity, promoting primer tRNA(i)-Met annealing to the multipartite primer-binding site (PBS), dimerization of Ty2 RNA and initiation of reverse transcription (By similarity).</text>
</comment>
<comment type="function">
    <text evidence="1">The aspartyl protease (PR) mediates the proteolytic cleavages of the Gag and Gag-Pol polyproteins after assembly of the VLP.</text>
</comment>
<comment type="function">
    <text evidence="1">Reverse transcriptase/ribonuclease H (RT) is a multifunctional enzyme that catalyzes the conversion of the retro-elements RNA genome into dsDNA within the VLP. The enzyme displays a DNA polymerase activity that can copy either DNA or RNA templates, and a ribonuclease H (RNase H) activity that cleaves the RNA strand of RNA-DNA heteroduplexes during plus-strand synthesis and hydrolyzes RNA primers. The conversion leads to a linear dsDNA copy of the retrotransposon that includes long terminal repeats (LTRs) at both ends (By similarity).</text>
</comment>
<comment type="function">
    <text evidence="1">Integrase (IN) targets the VLP to the nucleus, where a subparticle preintegration complex (PIC) containing at least integrase and the newly synthesized dsDNA copy of the retrotransposon must transit the nuclear membrane. Once in the nucleus, integrase performs the integration of the dsDNA into the host genome (By similarity).</text>
</comment>
<comment type="catalytic activity">
    <reaction>
        <text>DNA(n) + a 2'-deoxyribonucleoside 5'-triphosphate = DNA(n+1) + diphosphate</text>
        <dbReference type="Rhea" id="RHEA:22508"/>
        <dbReference type="Rhea" id="RHEA-COMP:17339"/>
        <dbReference type="Rhea" id="RHEA-COMP:17340"/>
        <dbReference type="ChEBI" id="CHEBI:33019"/>
        <dbReference type="ChEBI" id="CHEBI:61560"/>
        <dbReference type="ChEBI" id="CHEBI:173112"/>
        <dbReference type="EC" id="2.7.7.49"/>
    </reaction>
</comment>
<comment type="catalytic activity">
    <reaction>
        <text>DNA(n) + a 2'-deoxyribonucleoside 5'-triphosphate = DNA(n+1) + diphosphate</text>
        <dbReference type="Rhea" id="RHEA:22508"/>
        <dbReference type="Rhea" id="RHEA-COMP:17339"/>
        <dbReference type="Rhea" id="RHEA-COMP:17340"/>
        <dbReference type="ChEBI" id="CHEBI:33019"/>
        <dbReference type="ChEBI" id="CHEBI:61560"/>
        <dbReference type="ChEBI" id="CHEBI:173112"/>
        <dbReference type="EC" id="2.7.7.7"/>
    </reaction>
</comment>
<comment type="catalytic activity">
    <reaction>
        <text>Endonucleolytic cleavage to 5'-phosphomonoester.</text>
        <dbReference type="EC" id="3.1.26.4"/>
    </reaction>
</comment>
<comment type="subunit">
    <text evidence="1">The capsid protein forms a homotrimer, from which the VLPs are assembled. The protease is a homodimer, whose active site consists of two apposed aspartic acid residues (By similarity).</text>
</comment>
<comment type="subcellular location">
    <subcellularLocation>
        <location>Cytoplasm</location>
    </subcellularLocation>
    <subcellularLocation>
        <location evidence="1">Nucleus</location>
    </subcellularLocation>
</comment>
<comment type="alternative products">
    <event type="ribosomal frameshifting"/>
    <isoform>
        <id>Q12113-1</id>
        <name>Transposon Ty2-OR1 Gag-Pol polyprotein</name>
        <sequence type="displayed"/>
    </isoform>
    <isoform>
        <id>Q12439-1</id>
        <name>Transposon Ty2-OR1 Gag polyprotein</name>
        <sequence type="external"/>
    </isoform>
    <text>The Gag-Pol polyprotein is generated by a +1 ribosomal frameshift.</text>
</comment>
<comment type="domain">
    <text evidence="1">The C-terminal RNA-binding region of CA is sufficient for all its nucleocapsid-like chaperone activities.</text>
</comment>
<comment type="domain">
    <text evidence="1">Integrase core domain contains the D-x(n)-D-x(35)-E motif, named for the phylogenetically conserved glutamic acid and aspartic acid residues and the invariant 35 amino acid spacing between the second and third acidic residues. Each acidic residue of the D,D(35)E motif is independently essential for the 3'-processing and strand transfer activities of purified integrase protein (By similarity).</text>
</comment>
<comment type="PTM">
    <text evidence="1">Initially, virus-like particles (VLPs) are composed of the structural unprocessed proteins Gag and Gag-Pol, and also contain the host initiator methionine tRNA (tRNA(i)-Met) which serves as a primer for minus-strand DNA synthesis, and a dimer of genomic Ty RNA. Processing of the polyproteins occurs within the particle and proceeds by an ordered pathway, called maturation. First, the protease (PR) is released by autocatalytic cleavage of the Gag-Pol polyprotein, and this cleavage is a prerequisite for subsequent processing at the remaining sites to release the mature structural and catalytic proteins. Maturation takes place prior to the RT reaction and is required to produce transposition-competent VLPs (By similarity).</text>
</comment>
<comment type="miscellaneous">
    <text>Retrotransposons are mobile genetic entities that are able to replicate via an RNA intermediate and a reverse transcription step. In contrast to retroviruses, retrotransposons are non-infectious, lack an envelope and remain intracellular. Ty2 retrotransposons belong to the copia elements (pseudoviridae).</text>
</comment>
<comment type="miscellaneous">
    <molecule>Isoform Transposon Ty2-OR1 Gag-Pol polyprotein</molecule>
    <text>Produced by +1 ribosomal frameshifting between codon Leu-431 and Gly-432 of the YOR192C-A ORF.</text>
</comment>
<gene>
    <name type="primary">TY2B-OR1</name>
    <name type="synonym">YORCTy2-1 POL</name>
    <name type="ordered locus">YOR192C-B</name>
    <name type="ORF">O4785</name>
</gene>